<keyword id="KW-0064">Aspartyl protease</keyword>
<keyword id="KW-0997">Cell inner membrane</keyword>
<keyword id="KW-1003">Cell membrane</keyword>
<keyword id="KW-0378">Hydrolase</keyword>
<keyword id="KW-0472">Membrane</keyword>
<keyword id="KW-0645">Protease</keyword>
<keyword id="KW-1185">Reference proteome</keyword>
<keyword id="KW-0812">Transmembrane</keyword>
<keyword id="KW-1133">Transmembrane helix</keyword>
<sequence>MASFLSRLPQGKVVAALIVLLLVVDQVIKIWVKTTMVLGQSHVVAPWFQIHFVENPGMAFGIELGSKLFLSLFRIVAMGFCIYLLAKLVRKREHTLAFLSCLSLIIAGGIGNIIDSIFYGVIFSGSHGQIAQLFPSGGGYETWFHGRVVDMFYFPLIEGVFPSWLPFWGGEEFVFFHPVFNFADSCISIGLILLLVCYPRTVSLLLDGKKTLPEGTTEDSEPTKRE</sequence>
<protein>
    <recommendedName>
        <fullName evidence="1">Lipoprotein signal peptidase</fullName>
        <ecNumber evidence="1">3.4.23.36</ecNumber>
    </recommendedName>
    <alternativeName>
        <fullName evidence="1">Prolipoprotein signal peptidase</fullName>
    </alternativeName>
    <alternativeName>
        <fullName evidence="1">Signal peptidase II</fullName>
        <shortName evidence="1">SPase II</shortName>
    </alternativeName>
</protein>
<proteinExistence type="inferred from homology"/>
<organism>
    <name type="scientific">Porphyromonas gingivalis (strain ATCC BAA-308 / W83)</name>
    <dbReference type="NCBI Taxonomy" id="242619"/>
    <lineage>
        <taxon>Bacteria</taxon>
        <taxon>Pseudomonadati</taxon>
        <taxon>Bacteroidota</taxon>
        <taxon>Bacteroidia</taxon>
        <taxon>Bacteroidales</taxon>
        <taxon>Porphyromonadaceae</taxon>
        <taxon>Porphyromonas</taxon>
    </lineage>
</organism>
<feature type="chain" id="PRO_0000289409" description="Lipoprotein signal peptidase">
    <location>
        <begin position="1"/>
        <end position="226"/>
    </location>
</feature>
<feature type="transmembrane region" description="Helical" evidence="1">
    <location>
        <begin position="12"/>
        <end position="32"/>
    </location>
</feature>
<feature type="transmembrane region" description="Helical" evidence="1">
    <location>
        <begin position="69"/>
        <end position="89"/>
    </location>
</feature>
<feature type="transmembrane region" description="Helical" evidence="1">
    <location>
        <begin position="103"/>
        <end position="123"/>
    </location>
</feature>
<feature type="transmembrane region" description="Helical" evidence="1">
    <location>
        <begin position="173"/>
        <end position="193"/>
    </location>
</feature>
<feature type="active site" evidence="1">
    <location>
        <position position="150"/>
    </location>
</feature>
<feature type="active site" evidence="1">
    <location>
        <position position="184"/>
    </location>
</feature>
<evidence type="ECO:0000255" key="1">
    <source>
        <dbReference type="HAMAP-Rule" id="MF_00161"/>
    </source>
</evidence>
<gene>
    <name evidence="1" type="primary">lspA</name>
    <name type="ordered locus">PG_1598</name>
</gene>
<dbReference type="EC" id="3.4.23.36" evidence="1"/>
<dbReference type="EMBL" id="AE015924">
    <property type="protein sequence ID" value="AAQ66627.1"/>
    <property type="molecule type" value="Genomic_DNA"/>
</dbReference>
<dbReference type="RefSeq" id="WP_004584054.1">
    <property type="nucleotide sequence ID" value="NC_002950.2"/>
</dbReference>
<dbReference type="SMR" id="Q7MUD1"/>
<dbReference type="STRING" id="242619.PG_1598"/>
<dbReference type="EnsemblBacteria" id="AAQ66627">
    <property type="protein sequence ID" value="AAQ66627"/>
    <property type="gene ID" value="PG_1598"/>
</dbReference>
<dbReference type="GeneID" id="29255745"/>
<dbReference type="KEGG" id="pgi:PG_1598"/>
<dbReference type="eggNOG" id="COG0597">
    <property type="taxonomic scope" value="Bacteria"/>
</dbReference>
<dbReference type="HOGENOM" id="CLU_083252_0_1_10"/>
<dbReference type="UniPathway" id="UPA00665"/>
<dbReference type="Proteomes" id="UP000000588">
    <property type="component" value="Chromosome"/>
</dbReference>
<dbReference type="GO" id="GO:0005886">
    <property type="term" value="C:plasma membrane"/>
    <property type="evidence" value="ECO:0007669"/>
    <property type="project" value="UniProtKB-SubCell"/>
</dbReference>
<dbReference type="GO" id="GO:0004190">
    <property type="term" value="F:aspartic-type endopeptidase activity"/>
    <property type="evidence" value="ECO:0007669"/>
    <property type="project" value="UniProtKB-UniRule"/>
</dbReference>
<dbReference type="GO" id="GO:0006508">
    <property type="term" value="P:proteolysis"/>
    <property type="evidence" value="ECO:0007669"/>
    <property type="project" value="UniProtKB-KW"/>
</dbReference>
<dbReference type="HAMAP" id="MF_00161">
    <property type="entry name" value="LspA"/>
    <property type="match status" value="1"/>
</dbReference>
<dbReference type="InterPro" id="IPR001872">
    <property type="entry name" value="Peptidase_A8"/>
</dbReference>
<dbReference type="NCBIfam" id="NF011369">
    <property type="entry name" value="PRK14788.1"/>
    <property type="match status" value="1"/>
</dbReference>
<dbReference type="PANTHER" id="PTHR33695">
    <property type="entry name" value="LIPOPROTEIN SIGNAL PEPTIDASE"/>
    <property type="match status" value="1"/>
</dbReference>
<dbReference type="PANTHER" id="PTHR33695:SF1">
    <property type="entry name" value="LIPOPROTEIN SIGNAL PEPTIDASE"/>
    <property type="match status" value="1"/>
</dbReference>
<dbReference type="Pfam" id="PF01252">
    <property type="entry name" value="Peptidase_A8"/>
    <property type="match status" value="1"/>
</dbReference>
<dbReference type="PRINTS" id="PR00781">
    <property type="entry name" value="LIPOSIGPTASE"/>
</dbReference>
<comment type="function">
    <text evidence="1">This protein specifically catalyzes the removal of signal peptides from prolipoproteins.</text>
</comment>
<comment type="catalytic activity">
    <reaction evidence="1">
        <text>Release of signal peptides from bacterial membrane prolipoproteins. Hydrolyzes -Xaa-Yaa-Zaa-|-(S,diacylglyceryl)Cys-, in which Xaa is hydrophobic (preferably Leu), and Yaa (Ala or Ser) and Zaa (Gly or Ala) have small, neutral side chains.</text>
        <dbReference type="EC" id="3.4.23.36"/>
    </reaction>
</comment>
<comment type="pathway">
    <text evidence="1">Protein modification; lipoprotein biosynthesis (signal peptide cleavage).</text>
</comment>
<comment type="subcellular location">
    <subcellularLocation>
        <location evidence="1">Cell inner membrane</location>
        <topology evidence="1">Multi-pass membrane protein</topology>
    </subcellularLocation>
</comment>
<comment type="similarity">
    <text evidence="1">Belongs to the peptidase A8 family.</text>
</comment>
<name>LSPA_PORGI</name>
<accession>Q7MUD1</accession>
<reference key="1">
    <citation type="journal article" date="2003" name="J. Bacteriol.">
        <title>Complete genome sequence of the oral pathogenic bacterium Porphyromonas gingivalis strain W83.</title>
        <authorList>
            <person name="Nelson K.E."/>
            <person name="Fleischmann R.D."/>
            <person name="DeBoy R.T."/>
            <person name="Paulsen I.T."/>
            <person name="Fouts D.E."/>
            <person name="Eisen J.A."/>
            <person name="Daugherty S.C."/>
            <person name="Dodson R.J."/>
            <person name="Durkin A.S."/>
            <person name="Gwinn M.L."/>
            <person name="Haft D.H."/>
            <person name="Kolonay J.F."/>
            <person name="Nelson W.C."/>
            <person name="Mason T.M."/>
            <person name="Tallon L."/>
            <person name="Gray J."/>
            <person name="Granger D."/>
            <person name="Tettelin H."/>
            <person name="Dong H."/>
            <person name="Galvin J.L."/>
            <person name="Duncan M.J."/>
            <person name="Dewhirst F.E."/>
            <person name="Fraser C.M."/>
        </authorList>
    </citation>
    <scope>NUCLEOTIDE SEQUENCE [LARGE SCALE GENOMIC DNA]</scope>
    <source>
        <strain>ATCC BAA-308 / W83</strain>
    </source>
</reference>